<organism>
    <name type="scientific">Mus musculus</name>
    <name type="common">Mouse</name>
    <dbReference type="NCBI Taxonomy" id="10090"/>
    <lineage>
        <taxon>Eukaryota</taxon>
        <taxon>Metazoa</taxon>
        <taxon>Chordata</taxon>
        <taxon>Craniata</taxon>
        <taxon>Vertebrata</taxon>
        <taxon>Euteleostomi</taxon>
        <taxon>Mammalia</taxon>
        <taxon>Eutheria</taxon>
        <taxon>Euarchontoglires</taxon>
        <taxon>Glires</taxon>
        <taxon>Rodentia</taxon>
        <taxon>Myomorpha</taxon>
        <taxon>Muroidea</taxon>
        <taxon>Muridae</taxon>
        <taxon>Murinae</taxon>
        <taxon>Mus</taxon>
        <taxon>Mus</taxon>
    </lineage>
</organism>
<comment type="function">
    <text evidence="2 5 6">Chromatin-binding factor that repress Notch signaling in the absence of Notch intracellular domain by acting as a CBF1 corepressor. Binds to the HEY promoter and might assist, along with NCOR2, RBPJ-mediated repression (By similarity). Can suppress the cytotoxicity of ATXN1 in spinocerebellar ataxia type 1 (SCA1) (PubMed:16121196). In concert with CIC and ATXN1, involved in brain development (PubMed:28288114).</text>
</comment>
<comment type="subunit">
    <text evidence="2 6">Homodimer. Interacts (via AXH domain) with NCOR2 (By similarity). Interacts with ATXN1 and CIC. Directly interacts with RBPJ; this interaction is disrupted in the presence of Notch intracellular domain. Competes with ATXN1 for RBPJ-binding (By similarity). Found in a complex with CIC and ATXN1 (PubMed:28288114).</text>
</comment>
<comment type="subcellular location">
    <subcellularLocation>
        <location evidence="5">Nucleus</location>
    </subcellularLocation>
    <subcellularLocation>
        <location evidence="5">Cell projection</location>
        <location evidence="5">Dendrite</location>
    </subcellularLocation>
    <text>Forms nuclear foci. Colocalizes with NCOR2 and HDAC3. Distributed beyond the nucleus into the cell body and dendrites in Purkinje cells and in inferior olive cells.</text>
</comment>
<comment type="tissue specificity">
    <text evidence="5 6">Expressed in the cortex and hypothalamus (at protein level). Expressed in neuronal cells. Highly expressed in Purkinje cells of cerebellum.</text>
</comment>
<comment type="disruption phenotype">
    <text evidence="6">Mice with conditional knockouts of either ATXN1-ATXN1L or CIC in the developing forebrain exhibit intellectual disability, hyperactivity, social-behavioral deficits and reduced thickness of upper cortical layers.</text>
</comment>
<comment type="miscellaneous">
    <text>Its overexpression suppresses the ataxia caused by polyglutamine-expanded Atxn1. Competes with mutant Atxn1 and wild-type Atxn1 for association with CIC. Decreased association of mutant Atxn1 into its CIC-containing complexes decreases the levels of mutant Atxn1-containing CIC complexes, suppressing pathology, while promoting aggregation and thus increasing nuclear inclusions.</text>
</comment>
<comment type="similarity">
    <text evidence="7">Belongs to the ATXN1 family.</text>
</comment>
<name>ATX1L_MOUSE</name>
<gene>
    <name type="primary">Atxn1l</name>
    <name type="synonym">Boat</name>
</gene>
<proteinExistence type="evidence at protein level"/>
<sequence>MKPVHERSQECLPPKKRDLPVTSEDMGRTTSCSTNHTPSSDASEWSRGVVVAGQSQTGARVSLGGDGTEAITGLTVDQYGMLYKVAVPPATFSPTGLPSVVNMSPLPPTFNVASSLIQHPGIHYPPVHYAQLPSTSLQFIGSPYSLPYAVPPNFLPSPLLSPSANLATTHLPHFVPYASLLAEEATPPPQAASPAQSFNKSSSATSPPGQLPHHSNTQPLDLAPGRMPIYYQMSRLPAGYTLHETSTAGASPILTPQEGQSALEAAAANGQRQRERNVRRESEALDSASSKGESQGLVPVVECMADGQLFSGSQTPRVEVAAPAHRGTPDTDLEVQRVVGALASQDYRVVAAQRKDEPSPLNLSHHNLDHQGEGRGSARNPTELVEKSQARVFYPQSHQEPVKHRPLPKAMVVANGNLVPTGTDPSLLPVGSEILVASSLDLQARATFPDKEPTPPPVTSSHLPSHFMKGAIIQLATGELKRVEDLQTQDFVRSAEVSGGLKIDSSTVVDIQESQWPGFVMLHFVVGEQQSKVSIEVPPEHPFFVYGQGWSSCSPGRTAQLFSLPCHRLQVGDVCISISLQSLNSNSVSQASCAPPGQLGTPRERPERTVLGPRDLCDSEGKNQPSGEGSRVGEPSQPEPGAQACWPAPSFQRFSMQGEEARAAMLRPSFIPQEVKLSIEGRSNAGK</sequence>
<dbReference type="EMBL" id="AC132138">
    <property type="status" value="NOT_ANNOTATED_CDS"/>
    <property type="molecule type" value="Genomic_DNA"/>
</dbReference>
<dbReference type="CCDS" id="CCDS40474.1"/>
<dbReference type="RefSeq" id="NP_001074399.1">
    <property type="nucleotide sequence ID" value="NM_001080930.2"/>
</dbReference>
<dbReference type="RefSeq" id="NP_001355279.1">
    <property type="nucleotide sequence ID" value="NM_001368350.1"/>
</dbReference>
<dbReference type="RefSeq" id="NP_001355280.1">
    <property type="nucleotide sequence ID" value="NM_001368351.1"/>
</dbReference>
<dbReference type="RefSeq" id="NP_001355281.1">
    <property type="nucleotide sequence ID" value="NM_001368352.1"/>
</dbReference>
<dbReference type="RefSeq" id="XP_011246741.1">
    <property type="nucleotide sequence ID" value="XM_011248439.3"/>
</dbReference>
<dbReference type="RefSeq" id="XP_011246742.1">
    <property type="nucleotide sequence ID" value="XM_011248440.2"/>
</dbReference>
<dbReference type="RefSeq" id="XP_011246743.1">
    <property type="nucleotide sequence ID" value="XM_011248441.2"/>
</dbReference>
<dbReference type="RefSeq" id="XP_017168386.1">
    <property type="nucleotide sequence ID" value="XM_017312897.1"/>
</dbReference>
<dbReference type="RefSeq" id="XP_030099530.1">
    <property type="nucleotide sequence ID" value="XM_030243670.2"/>
</dbReference>
<dbReference type="SMR" id="P0C7T6"/>
<dbReference type="BioGRID" id="206522">
    <property type="interactions" value="3"/>
</dbReference>
<dbReference type="FunCoup" id="P0C7T6">
    <property type="interactions" value="4099"/>
</dbReference>
<dbReference type="STRING" id="10090.ENSMUSP00000090850"/>
<dbReference type="GlyGen" id="P0C7T6">
    <property type="glycosylation" value="8 sites, 1 O-linked glycan (7 sites)"/>
</dbReference>
<dbReference type="iPTMnet" id="P0C7T6"/>
<dbReference type="PhosphoSitePlus" id="P0C7T6"/>
<dbReference type="jPOST" id="P0C7T6"/>
<dbReference type="PaxDb" id="10090-ENSMUSP00000090850"/>
<dbReference type="PeptideAtlas" id="P0C7T6"/>
<dbReference type="ProteomicsDB" id="273627"/>
<dbReference type="Pumba" id="P0C7T6"/>
<dbReference type="Antibodypedia" id="67440">
    <property type="antibodies" value="85 antibodies from 13 providers"/>
</dbReference>
<dbReference type="Ensembl" id="ENSMUST00000093162.4">
    <property type="protein sequence ID" value="ENSMUSP00000090850.4"/>
    <property type="gene ID" value="ENSMUSG00000069895.5"/>
</dbReference>
<dbReference type="Ensembl" id="ENSMUST00000212605.2">
    <property type="protein sequence ID" value="ENSMUSP00000148324.2"/>
    <property type="gene ID" value="ENSMUSG00000069895.5"/>
</dbReference>
<dbReference type="GeneID" id="52335"/>
<dbReference type="KEGG" id="mmu:52335"/>
<dbReference type="UCSC" id="uc009njh.1">
    <property type="organism name" value="mouse"/>
</dbReference>
<dbReference type="AGR" id="MGI:3694797"/>
<dbReference type="CTD" id="342371"/>
<dbReference type="MGI" id="MGI:3694797">
    <property type="gene designation" value="Atxn1l"/>
</dbReference>
<dbReference type="VEuPathDB" id="HostDB:ENSMUSG00000069895"/>
<dbReference type="eggNOG" id="KOG4053">
    <property type="taxonomic scope" value="Eukaryota"/>
</dbReference>
<dbReference type="GeneTree" id="ENSGT00390000005939"/>
<dbReference type="HOGENOM" id="CLU_434497_0_0_1"/>
<dbReference type="InParanoid" id="P0C7T6"/>
<dbReference type="OMA" id="WAGPSFQ"/>
<dbReference type="OrthoDB" id="10000452at2759"/>
<dbReference type="PhylomeDB" id="P0C7T6"/>
<dbReference type="TreeFam" id="TF350643"/>
<dbReference type="BioGRID-ORCS" id="52335">
    <property type="hits" value="3 hits in 77 CRISPR screens"/>
</dbReference>
<dbReference type="ChiTaRS" id="Atxn1l">
    <property type="organism name" value="mouse"/>
</dbReference>
<dbReference type="PRO" id="PR:P0C7T6"/>
<dbReference type="Proteomes" id="UP000000589">
    <property type="component" value="Chromosome 8"/>
</dbReference>
<dbReference type="RNAct" id="P0C7T6">
    <property type="molecule type" value="protein"/>
</dbReference>
<dbReference type="Bgee" id="ENSMUSG00000069895">
    <property type="expression patterns" value="Expressed in ascending aorta and 218 other cell types or tissues"/>
</dbReference>
<dbReference type="ExpressionAtlas" id="P0C7T6">
    <property type="expression patterns" value="baseline and differential"/>
</dbReference>
<dbReference type="GO" id="GO:0030425">
    <property type="term" value="C:dendrite"/>
    <property type="evidence" value="ECO:0007669"/>
    <property type="project" value="UniProtKB-SubCell"/>
</dbReference>
<dbReference type="GO" id="GO:0005730">
    <property type="term" value="C:nucleolus"/>
    <property type="evidence" value="ECO:0007669"/>
    <property type="project" value="Ensembl"/>
</dbReference>
<dbReference type="GO" id="GO:0005654">
    <property type="term" value="C:nucleoplasm"/>
    <property type="evidence" value="ECO:0007669"/>
    <property type="project" value="Ensembl"/>
</dbReference>
<dbReference type="GO" id="GO:0003677">
    <property type="term" value="F:DNA binding"/>
    <property type="evidence" value="ECO:0007669"/>
    <property type="project" value="UniProtKB-KW"/>
</dbReference>
<dbReference type="GO" id="GO:0031208">
    <property type="term" value="F:POZ domain binding"/>
    <property type="evidence" value="ECO:0000353"/>
    <property type="project" value="MGI"/>
</dbReference>
<dbReference type="GO" id="GO:0003723">
    <property type="term" value="F:RNA binding"/>
    <property type="evidence" value="ECO:0007669"/>
    <property type="project" value="InterPro"/>
</dbReference>
<dbReference type="GO" id="GO:0007420">
    <property type="term" value="P:brain development"/>
    <property type="evidence" value="ECO:0000315"/>
    <property type="project" value="UniProtKB"/>
</dbReference>
<dbReference type="GO" id="GO:0030198">
    <property type="term" value="P:extracellular matrix organization"/>
    <property type="evidence" value="ECO:0000315"/>
    <property type="project" value="MGI"/>
</dbReference>
<dbReference type="GO" id="GO:0007612">
    <property type="term" value="P:learning"/>
    <property type="evidence" value="ECO:0000315"/>
    <property type="project" value="UniProtKB"/>
</dbReference>
<dbReference type="GO" id="GO:0048286">
    <property type="term" value="P:lung alveolus development"/>
    <property type="evidence" value="ECO:0000315"/>
    <property type="project" value="MGI"/>
</dbReference>
<dbReference type="GO" id="GO:0007613">
    <property type="term" value="P:memory"/>
    <property type="evidence" value="ECO:0000315"/>
    <property type="project" value="UniProtKB"/>
</dbReference>
<dbReference type="GO" id="GO:0000122">
    <property type="term" value="P:negative regulation of transcription by RNA polymerase II"/>
    <property type="evidence" value="ECO:0000316"/>
    <property type="project" value="MGI"/>
</dbReference>
<dbReference type="GO" id="GO:1902035">
    <property type="term" value="P:positive regulation of hematopoietic stem cell proliferation"/>
    <property type="evidence" value="ECO:0000315"/>
    <property type="project" value="MGI"/>
</dbReference>
<dbReference type="GO" id="GO:0035176">
    <property type="term" value="P:social behavior"/>
    <property type="evidence" value="ECO:0000315"/>
    <property type="project" value="UniProtKB"/>
</dbReference>
<dbReference type="GO" id="GO:0006366">
    <property type="term" value="P:transcription by RNA polymerase II"/>
    <property type="evidence" value="ECO:0000316"/>
    <property type="project" value="MGI"/>
</dbReference>
<dbReference type="Gene3D" id="2.170.16.10">
    <property type="entry name" value="Hedgehog/Intein (Hint) domain"/>
    <property type="match status" value="1"/>
</dbReference>
<dbReference type="InterPro" id="IPR020997">
    <property type="entry name" value="Ataxin-1_N"/>
</dbReference>
<dbReference type="InterPro" id="IPR043404">
    <property type="entry name" value="ATAXIN1-like"/>
</dbReference>
<dbReference type="InterPro" id="IPR003652">
    <property type="entry name" value="Ataxin_AXH_dom"/>
</dbReference>
<dbReference type="InterPro" id="IPR036096">
    <property type="entry name" value="Ataxin_AXH_dom_sf"/>
</dbReference>
<dbReference type="PANTHER" id="PTHR13392">
    <property type="entry name" value="ATAXIN 1"/>
    <property type="match status" value="1"/>
</dbReference>
<dbReference type="PANTHER" id="PTHR13392:SF6">
    <property type="entry name" value="ATAXIN-1-LIKE"/>
    <property type="match status" value="1"/>
</dbReference>
<dbReference type="Pfam" id="PF12547">
    <property type="entry name" value="ATXN-1_C"/>
    <property type="match status" value="1"/>
</dbReference>
<dbReference type="Pfam" id="PF08517">
    <property type="entry name" value="AXH"/>
    <property type="match status" value="1"/>
</dbReference>
<dbReference type="SMART" id="SM00536">
    <property type="entry name" value="AXH"/>
    <property type="match status" value="1"/>
</dbReference>
<dbReference type="SUPFAM" id="SSF102031">
    <property type="entry name" value="AXH domain"/>
    <property type="match status" value="1"/>
</dbReference>
<dbReference type="PROSITE" id="PS51148">
    <property type="entry name" value="AXH"/>
    <property type="match status" value="1"/>
</dbReference>
<accession>P0C7T6</accession>
<reference key="1">
    <citation type="journal article" date="2009" name="PLoS Biol.">
        <title>Lineage-specific biology revealed by a finished genome assembly of the mouse.</title>
        <authorList>
            <person name="Church D.M."/>
            <person name="Goodstadt L."/>
            <person name="Hillier L.W."/>
            <person name="Zody M.C."/>
            <person name="Goldstein S."/>
            <person name="She X."/>
            <person name="Bult C.J."/>
            <person name="Agarwala R."/>
            <person name="Cherry J.L."/>
            <person name="DiCuccio M."/>
            <person name="Hlavina W."/>
            <person name="Kapustin Y."/>
            <person name="Meric P."/>
            <person name="Maglott D."/>
            <person name="Birtle Z."/>
            <person name="Marques A.C."/>
            <person name="Graves T."/>
            <person name="Zhou S."/>
            <person name="Teague B."/>
            <person name="Potamousis K."/>
            <person name="Churas C."/>
            <person name="Place M."/>
            <person name="Herschleb J."/>
            <person name="Runnheim R."/>
            <person name="Forrest D."/>
            <person name="Amos-Landgraf J."/>
            <person name="Schwartz D.C."/>
            <person name="Cheng Z."/>
            <person name="Lindblad-Toh K."/>
            <person name="Eichler E.E."/>
            <person name="Ponting C.P."/>
        </authorList>
    </citation>
    <scope>NUCLEOTIDE SEQUENCE [LARGE SCALE GENOMIC DNA]</scope>
    <source>
        <strain>C57BL/6J</strain>
    </source>
</reference>
<reference key="2">
    <citation type="journal article" date="2005" name="EMBO J.">
        <title>Boat, an AXH domain protein, suppresses the cytotoxicity of mutant ataxin-1.</title>
        <authorList>
            <person name="Mizutani A."/>
            <person name="Wang L."/>
            <person name="Rajan H."/>
            <person name="Vig P.J.S."/>
            <person name="Alaynick W.A."/>
            <person name="Thaler J.P."/>
            <person name="Tsai C.-C."/>
        </authorList>
    </citation>
    <scope>FUNCTION</scope>
    <scope>SUBCELLULAR LOCATION</scope>
    <scope>TISSUE SPECIFICITY</scope>
</reference>
<reference key="3">
    <citation type="journal article" date="2007" name="Nat. Genet.">
        <title>Duplication of Atxn1l suppresses SCA1 neuropathology by decreasing incorporation of polyglutamine-expanded ataxin-1 into native complexes.</title>
        <authorList>
            <person name="Bowman A.B."/>
            <person name="Lam Y.C."/>
            <person name="Jafar-Nejad P."/>
            <person name="Chen H.-K."/>
            <person name="Richman R."/>
            <person name="Samaco R.C."/>
            <person name="Fryer J.D."/>
            <person name="Kahle J.J."/>
            <person name="Orr H.T."/>
            <person name="Zoghbi H.Y."/>
        </authorList>
    </citation>
    <scope>INTERACTION WITH ATXN1 AND CIC</scope>
</reference>
<reference key="4">
    <citation type="journal article" date="2010" name="Cell">
        <title>A tissue-specific atlas of mouse protein phosphorylation and expression.</title>
        <authorList>
            <person name="Huttlin E.L."/>
            <person name="Jedrychowski M.P."/>
            <person name="Elias J.E."/>
            <person name="Goswami T."/>
            <person name="Rad R."/>
            <person name="Beausoleil S.A."/>
            <person name="Villen J."/>
            <person name="Haas W."/>
            <person name="Sowa M.E."/>
            <person name="Gygi S.P."/>
        </authorList>
    </citation>
    <scope>PHOSPHORYLATION [LARGE SCALE ANALYSIS] AT SER-282 AND SER-359</scope>
    <scope>IDENTIFICATION BY MASS SPECTROMETRY [LARGE SCALE ANALYSIS]</scope>
    <source>
        <tissue>Brain</tissue>
        <tissue>Heart</tissue>
        <tissue>Kidney</tissue>
        <tissue>Lung</tissue>
        <tissue>Spleen</tissue>
    </source>
</reference>
<reference key="5">
    <citation type="journal article" date="2017" name="Nat. Genet.">
        <title>Disruption of the ATXN1-CIC complex causes a spectrum of neurobehavioral phenotypes in mice and humans.</title>
        <authorList>
            <person name="Lu H.C."/>
            <person name="Tan Q."/>
            <person name="Rousseaux M.W."/>
            <person name="Wang W."/>
            <person name="Kim J.Y."/>
            <person name="Richman R."/>
            <person name="Wan Y.W."/>
            <person name="Yeh S.Y."/>
            <person name="Patel J.M."/>
            <person name="Liu X."/>
            <person name="Lin T."/>
            <person name="Lee Y."/>
            <person name="Fryer J.D."/>
            <person name="Han J."/>
            <person name="Chahrour M."/>
            <person name="Finnell R.H."/>
            <person name="Lei Y."/>
            <person name="Zurita-Jimenez M.E."/>
            <person name="Ahimaz P."/>
            <person name="Anyane-Yeboa K."/>
            <person name="Van Maldergem L."/>
            <person name="Lehalle D."/>
            <person name="Jean-Marcais N."/>
            <person name="Mosca-Boidron A.L."/>
            <person name="Thevenon J."/>
            <person name="Cousin M.A."/>
            <person name="Bro D.E."/>
            <person name="Lanpher B.C."/>
            <person name="Klee E.W."/>
            <person name="Alexander N."/>
            <person name="Bainbridge M.N."/>
            <person name="Orr H.T."/>
            <person name="Sillitoe R.V."/>
            <person name="Ljungberg M.C."/>
            <person name="Liu Z."/>
            <person name="Schaaf C.P."/>
            <person name="Zoghbi H.Y."/>
        </authorList>
    </citation>
    <scope>FUNCTION</scope>
    <scope>DISRUPTION PHENOTYPE</scope>
    <scope>TISSUE SPECIFICITY</scope>
    <scope>IDENTIFICATION IN A COMPLEX WITH CIC AND ATXN1</scope>
</reference>
<feature type="chain" id="PRO_0000343710" description="Ataxin-1-like">
    <location>
        <begin position="1"/>
        <end position="687"/>
    </location>
</feature>
<feature type="domain" description="AXH" evidence="3">
    <location>
        <begin position="455"/>
        <end position="586"/>
    </location>
</feature>
<feature type="region of interest" description="Disordered" evidence="4">
    <location>
        <begin position="1"/>
        <end position="46"/>
    </location>
</feature>
<feature type="region of interest" description="Interaction with NCOR2 and ATXN1" evidence="1">
    <location>
        <begin position="20"/>
        <end position="197"/>
    </location>
</feature>
<feature type="region of interest" description="Self-association" evidence="1">
    <location>
        <begin position="20"/>
        <end position="197"/>
    </location>
</feature>
<feature type="region of interest" description="Disordered" evidence="4">
    <location>
        <begin position="185"/>
        <end position="223"/>
    </location>
</feature>
<feature type="region of interest" description="Disordered" evidence="4">
    <location>
        <begin position="261"/>
        <end position="294"/>
    </location>
</feature>
<feature type="region of interest" description="Disordered" evidence="4">
    <location>
        <begin position="356"/>
        <end position="379"/>
    </location>
</feature>
<feature type="region of interest" description="Disordered" evidence="4">
    <location>
        <begin position="587"/>
        <end position="649"/>
    </location>
</feature>
<feature type="compositionally biased region" description="Basic and acidic residues" evidence="4">
    <location>
        <begin position="1"/>
        <end position="19"/>
    </location>
</feature>
<feature type="compositionally biased region" description="Polar residues" evidence="4">
    <location>
        <begin position="28"/>
        <end position="43"/>
    </location>
</feature>
<feature type="compositionally biased region" description="Polar residues" evidence="4">
    <location>
        <begin position="198"/>
        <end position="219"/>
    </location>
</feature>
<feature type="compositionally biased region" description="Basic and acidic residues" evidence="4">
    <location>
        <begin position="272"/>
        <end position="283"/>
    </location>
</feature>
<feature type="modified residue" description="Phosphoserine" evidence="8">
    <location>
        <position position="282"/>
    </location>
</feature>
<feature type="modified residue" description="Phosphothreonine" evidence="2">
    <location>
        <position position="328"/>
    </location>
</feature>
<feature type="modified residue" description="Phosphoserine" evidence="8">
    <location>
        <position position="359"/>
    </location>
</feature>
<keyword id="KW-0966">Cell projection</keyword>
<keyword id="KW-0238">DNA-binding</keyword>
<keyword id="KW-0539">Nucleus</keyword>
<keyword id="KW-0597">Phosphoprotein</keyword>
<keyword id="KW-1185">Reference proteome</keyword>
<keyword id="KW-0678">Repressor</keyword>
<keyword id="KW-0804">Transcription</keyword>
<keyword id="KW-0805">Transcription regulation</keyword>
<protein>
    <recommendedName>
        <fullName>Ataxin-1-like</fullName>
    </recommendedName>
    <alternativeName>
        <fullName>Brother of ataxin-1</fullName>
    </alternativeName>
</protein>
<evidence type="ECO:0000250" key="1"/>
<evidence type="ECO:0000250" key="2">
    <source>
        <dbReference type="UniProtKB" id="P0C7T5"/>
    </source>
</evidence>
<evidence type="ECO:0000255" key="3">
    <source>
        <dbReference type="PROSITE-ProRule" id="PRU00496"/>
    </source>
</evidence>
<evidence type="ECO:0000256" key="4">
    <source>
        <dbReference type="SAM" id="MobiDB-lite"/>
    </source>
</evidence>
<evidence type="ECO:0000269" key="5">
    <source>
    </source>
</evidence>
<evidence type="ECO:0000269" key="6">
    <source>
    </source>
</evidence>
<evidence type="ECO:0000305" key="7"/>
<evidence type="ECO:0007744" key="8">
    <source>
    </source>
</evidence>